<gene>
    <name evidence="1" type="primary">chlL</name>
    <name type="ordered locus">P9215_06241</name>
</gene>
<protein>
    <recommendedName>
        <fullName evidence="1">Light-independent protochlorophyllide reductase iron-sulfur ATP-binding protein</fullName>
        <shortName evidence="1">DPOR subunit L</shortName>
        <shortName evidence="1">LI-POR subunit L</shortName>
        <ecNumber evidence="1">1.3.7.7</ecNumber>
    </recommendedName>
</protein>
<comment type="function">
    <text evidence="1">Component of the dark-operative protochlorophyllide reductase (DPOR) that uses Mg-ATP and reduced ferredoxin to reduce ring D of protochlorophyllide (Pchlide) to form chlorophyllide a (Chlide). This reaction is light-independent. The L component serves as a unique electron donor to the NB-component of the complex, and binds Mg-ATP.</text>
</comment>
<comment type="catalytic activity">
    <reaction evidence="1">
        <text>chlorophyllide a + oxidized 2[4Fe-4S]-[ferredoxin] + 2 ADP + 2 phosphate = protochlorophyllide a + reduced 2[4Fe-4S]-[ferredoxin] + 2 ATP + 2 H2O</text>
        <dbReference type="Rhea" id="RHEA:28202"/>
        <dbReference type="Rhea" id="RHEA-COMP:10002"/>
        <dbReference type="Rhea" id="RHEA-COMP:10004"/>
        <dbReference type="ChEBI" id="CHEBI:15377"/>
        <dbReference type="ChEBI" id="CHEBI:30616"/>
        <dbReference type="ChEBI" id="CHEBI:33722"/>
        <dbReference type="ChEBI" id="CHEBI:33723"/>
        <dbReference type="ChEBI" id="CHEBI:43474"/>
        <dbReference type="ChEBI" id="CHEBI:83348"/>
        <dbReference type="ChEBI" id="CHEBI:83350"/>
        <dbReference type="ChEBI" id="CHEBI:456216"/>
        <dbReference type="EC" id="1.3.7.7"/>
    </reaction>
</comment>
<comment type="cofactor">
    <cofactor evidence="1">
        <name>[4Fe-4S] cluster</name>
        <dbReference type="ChEBI" id="CHEBI:49883"/>
    </cofactor>
    <text evidence="1">Binds 1 [4Fe-4S] cluster per dimer.</text>
</comment>
<comment type="pathway">
    <text evidence="1">Porphyrin-containing compound metabolism; chlorophyll biosynthesis (light-independent).</text>
</comment>
<comment type="subunit">
    <text evidence="1">Homodimer. Protochlorophyllide reductase is composed of three subunits; ChlL, ChlN and ChlB.</text>
</comment>
<comment type="similarity">
    <text evidence="1">Belongs to the NifH/BchL/ChlL family.</text>
</comment>
<evidence type="ECO:0000255" key="1">
    <source>
        <dbReference type="HAMAP-Rule" id="MF_00355"/>
    </source>
</evidence>
<keyword id="KW-0004">4Fe-4S</keyword>
<keyword id="KW-0067">ATP-binding</keyword>
<keyword id="KW-0149">Chlorophyll biosynthesis</keyword>
<keyword id="KW-0408">Iron</keyword>
<keyword id="KW-0411">Iron-sulfur</keyword>
<keyword id="KW-0460">Magnesium</keyword>
<keyword id="KW-0479">Metal-binding</keyword>
<keyword id="KW-0547">Nucleotide-binding</keyword>
<keyword id="KW-0560">Oxidoreductase</keyword>
<keyword id="KW-0602">Photosynthesis</keyword>
<proteinExistence type="inferred from homology"/>
<feature type="chain" id="PRO_0000324059" description="Light-independent protochlorophyllide reductase iron-sulfur ATP-binding protein">
    <location>
        <begin position="1"/>
        <end position="295"/>
    </location>
</feature>
<feature type="binding site" evidence="1">
    <location>
        <begin position="39"/>
        <end position="44"/>
    </location>
    <ligand>
        <name>ATP</name>
        <dbReference type="ChEBI" id="CHEBI:30616"/>
    </ligand>
</feature>
<feature type="binding site" evidence="1">
    <location>
        <position position="43"/>
    </location>
    <ligand>
        <name>Mg(2+)</name>
        <dbReference type="ChEBI" id="CHEBI:18420"/>
    </ligand>
</feature>
<feature type="binding site" evidence="1">
    <location>
        <position position="68"/>
    </location>
    <ligand>
        <name>ATP</name>
        <dbReference type="ChEBI" id="CHEBI:30616"/>
    </ligand>
</feature>
<feature type="binding site" evidence="1">
    <location>
        <position position="124"/>
    </location>
    <ligand>
        <name>[4Fe-4S] cluster</name>
        <dbReference type="ChEBI" id="CHEBI:49883"/>
        <note>ligand shared between dimeric partners</note>
    </ligand>
</feature>
<feature type="binding site" evidence="1">
    <location>
        <position position="158"/>
    </location>
    <ligand>
        <name>[4Fe-4S] cluster</name>
        <dbReference type="ChEBI" id="CHEBI:49883"/>
        <note>ligand shared between dimeric partners</note>
    </ligand>
</feature>
<feature type="binding site" evidence="1">
    <location>
        <begin position="209"/>
        <end position="210"/>
    </location>
    <ligand>
        <name>ATP</name>
        <dbReference type="ChEBI" id="CHEBI:30616"/>
    </ligand>
</feature>
<sequence length="295" mass="32333">MTSTINKPLDGEGSVQVKQDPKINIEEGALVIAVYGKGGIGKSTTSSNLSAAFSKLGKKVLQIGCDPKHDSTFTLTHKMVPTVIDILEEVDFHSEELRPNDFMFEGFNGVMCVESGGPPAGTGCGGYVTGQTVKLLKEHHLLEDTDVVIFDVLGDVVCGGFAAPLQHANYCLIVTANDFDSIFAMNRIVSAIKAKAKNYKVRLGGVVANRSKDTDQIDKFNERTGLKTMAHFKDVDAIRRSRLKKCTIFEMEPTEDVIEVQNEYLSLAKNMLENVEPLEGNPLKDREIFDLLGFD</sequence>
<reference key="1">
    <citation type="journal article" date="2007" name="PLoS Genet.">
        <title>Patterns and implications of gene gain and loss in the evolution of Prochlorococcus.</title>
        <authorList>
            <person name="Kettler G.C."/>
            <person name="Martiny A.C."/>
            <person name="Huang K."/>
            <person name="Zucker J."/>
            <person name="Coleman M.L."/>
            <person name="Rodrigue S."/>
            <person name="Chen F."/>
            <person name="Lapidus A."/>
            <person name="Ferriera S."/>
            <person name="Johnson J."/>
            <person name="Steglich C."/>
            <person name="Church G.M."/>
            <person name="Richardson P."/>
            <person name="Chisholm S.W."/>
        </authorList>
    </citation>
    <scope>NUCLEOTIDE SEQUENCE [LARGE SCALE GENOMIC DNA]</scope>
    <source>
        <strain>MIT 9215</strain>
    </source>
</reference>
<dbReference type="EC" id="1.3.7.7" evidence="1"/>
<dbReference type="EMBL" id="CP000825">
    <property type="protein sequence ID" value="ABV50239.1"/>
    <property type="molecule type" value="Genomic_DNA"/>
</dbReference>
<dbReference type="SMR" id="A8G3Q8"/>
<dbReference type="STRING" id="93060.P9215_06241"/>
<dbReference type="KEGG" id="pmh:P9215_06241"/>
<dbReference type="eggNOG" id="COG1348">
    <property type="taxonomic scope" value="Bacteria"/>
</dbReference>
<dbReference type="HOGENOM" id="CLU_059373_2_0_3"/>
<dbReference type="OrthoDB" id="9778641at2"/>
<dbReference type="UniPathway" id="UPA00670"/>
<dbReference type="Proteomes" id="UP000002014">
    <property type="component" value="Chromosome"/>
</dbReference>
<dbReference type="GO" id="GO:0051539">
    <property type="term" value="F:4 iron, 4 sulfur cluster binding"/>
    <property type="evidence" value="ECO:0007669"/>
    <property type="project" value="UniProtKB-UniRule"/>
</dbReference>
<dbReference type="GO" id="GO:0005524">
    <property type="term" value="F:ATP binding"/>
    <property type="evidence" value="ECO:0007669"/>
    <property type="project" value="UniProtKB-UniRule"/>
</dbReference>
<dbReference type="GO" id="GO:0046872">
    <property type="term" value="F:metal ion binding"/>
    <property type="evidence" value="ECO:0007669"/>
    <property type="project" value="UniProtKB-KW"/>
</dbReference>
<dbReference type="GO" id="GO:0016730">
    <property type="term" value="F:oxidoreductase activity, acting on iron-sulfur proteins as donors"/>
    <property type="evidence" value="ECO:0007669"/>
    <property type="project" value="InterPro"/>
</dbReference>
<dbReference type="GO" id="GO:0016636">
    <property type="term" value="F:oxidoreductase activity, acting on the CH-CH group of donors, iron-sulfur protein as acceptor"/>
    <property type="evidence" value="ECO:0007669"/>
    <property type="project" value="UniProtKB-UniRule"/>
</dbReference>
<dbReference type="GO" id="GO:0036068">
    <property type="term" value="P:light-independent chlorophyll biosynthetic process"/>
    <property type="evidence" value="ECO:0007669"/>
    <property type="project" value="UniProtKB-UniRule"/>
</dbReference>
<dbReference type="GO" id="GO:0019685">
    <property type="term" value="P:photosynthesis, dark reaction"/>
    <property type="evidence" value="ECO:0007669"/>
    <property type="project" value="InterPro"/>
</dbReference>
<dbReference type="CDD" id="cd02032">
    <property type="entry name" value="Bchl-like"/>
    <property type="match status" value="1"/>
</dbReference>
<dbReference type="Gene3D" id="3.40.50.300">
    <property type="entry name" value="P-loop containing nucleotide triphosphate hydrolases"/>
    <property type="match status" value="1"/>
</dbReference>
<dbReference type="HAMAP" id="MF_00355">
    <property type="entry name" value="ChlL_BchL"/>
    <property type="match status" value="1"/>
</dbReference>
<dbReference type="InterPro" id="IPR030655">
    <property type="entry name" value="NifH/chlL_CS"/>
</dbReference>
<dbReference type="InterPro" id="IPR000392">
    <property type="entry name" value="NifH/frxC"/>
</dbReference>
<dbReference type="InterPro" id="IPR027417">
    <property type="entry name" value="P-loop_NTPase"/>
</dbReference>
<dbReference type="InterPro" id="IPR005971">
    <property type="entry name" value="Protochlorophyllide_ATP-bd"/>
</dbReference>
<dbReference type="NCBIfam" id="TIGR01281">
    <property type="entry name" value="DPOR_bchL"/>
    <property type="match status" value="1"/>
</dbReference>
<dbReference type="PANTHER" id="PTHR42864">
    <property type="entry name" value="LIGHT-INDEPENDENT PROTOCHLOROPHYLLIDE REDUCTASE IRON-SULFUR ATP-BINDING PROTEIN"/>
    <property type="match status" value="1"/>
</dbReference>
<dbReference type="PANTHER" id="PTHR42864:SF2">
    <property type="entry name" value="LIGHT-INDEPENDENT PROTOCHLOROPHYLLIDE REDUCTASE IRON-SULFUR ATP-BINDING PROTEIN"/>
    <property type="match status" value="1"/>
</dbReference>
<dbReference type="Pfam" id="PF00142">
    <property type="entry name" value="Fer4_NifH"/>
    <property type="match status" value="1"/>
</dbReference>
<dbReference type="PIRSF" id="PIRSF000363">
    <property type="entry name" value="Nitrogenase_iron"/>
    <property type="match status" value="1"/>
</dbReference>
<dbReference type="PRINTS" id="PR00091">
    <property type="entry name" value="NITROGNASEII"/>
</dbReference>
<dbReference type="SUPFAM" id="SSF52540">
    <property type="entry name" value="P-loop containing nucleoside triphosphate hydrolases"/>
    <property type="match status" value="1"/>
</dbReference>
<dbReference type="PROSITE" id="PS00746">
    <property type="entry name" value="NIFH_FRXC_1"/>
    <property type="match status" value="1"/>
</dbReference>
<dbReference type="PROSITE" id="PS00692">
    <property type="entry name" value="NIFH_FRXC_2"/>
    <property type="match status" value="1"/>
</dbReference>
<dbReference type="PROSITE" id="PS51026">
    <property type="entry name" value="NIFH_FRXC_3"/>
    <property type="match status" value="1"/>
</dbReference>
<organism>
    <name type="scientific">Prochlorococcus marinus (strain MIT 9215)</name>
    <dbReference type="NCBI Taxonomy" id="93060"/>
    <lineage>
        <taxon>Bacteria</taxon>
        <taxon>Bacillati</taxon>
        <taxon>Cyanobacteriota</taxon>
        <taxon>Cyanophyceae</taxon>
        <taxon>Synechococcales</taxon>
        <taxon>Prochlorococcaceae</taxon>
        <taxon>Prochlorococcus</taxon>
    </lineage>
</organism>
<name>CHLL_PROM2</name>
<accession>A8G3Q8</accession>